<name>RBFA_RICPU</name>
<feature type="chain" id="PRO_1000201651" description="Ribosome-binding factor A">
    <location>
        <begin position="1"/>
        <end position="120"/>
    </location>
</feature>
<proteinExistence type="inferred from homology"/>
<gene>
    <name evidence="1" type="primary">rbfA</name>
    <name type="ordered locus">RPR_00615</name>
</gene>
<protein>
    <recommendedName>
        <fullName evidence="1">Ribosome-binding factor A</fullName>
    </recommendedName>
</protein>
<evidence type="ECO:0000255" key="1">
    <source>
        <dbReference type="HAMAP-Rule" id="MF_00003"/>
    </source>
</evidence>
<sequence>MKKLTKTHSHRQQKLASIINEALIEILRRGKMLDSRLFDCPLTITKVIVTTDLKIANCYFLPFNTKLTIDEIMDALNNSKNAIRNFITNKINMKFSPDIRFHYDHGFDNAIKVAHLLKDL</sequence>
<dbReference type="EMBL" id="CP001227">
    <property type="protein sequence ID" value="ACR47097.1"/>
    <property type="molecule type" value="Genomic_DNA"/>
</dbReference>
<dbReference type="RefSeq" id="WP_012736396.1">
    <property type="nucleotide sequence ID" value="NC_012730.1"/>
</dbReference>
<dbReference type="SMR" id="C4K0J6"/>
<dbReference type="KEGG" id="rpk:RPR_00615"/>
<dbReference type="HOGENOM" id="CLU_089475_1_0_5"/>
<dbReference type="Proteomes" id="UP000005015">
    <property type="component" value="Chromosome"/>
</dbReference>
<dbReference type="GO" id="GO:0005829">
    <property type="term" value="C:cytosol"/>
    <property type="evidence" value="ECO:0007669"/>
    <property type="project" value="TreeGrafter"/>
</dbReference>
<dbReference type="GO" id="GO:0043024">
    <property type="term" value="F:ribosomal small subunit binding"/>
    <property type="evidence" value="ECO:0007669"/>
    <property type="project" value="TreeGrafter"/>
</dbReference>
<dbReference type="GO" id="GO:0030490">
    <property type="term" value="P:maturation of SSU-rRNA"/>
    <property type="evidence" value="ECO:0007669"/>
    <property type="project" value="UniProtKB-UniRule"/>
</dbReference>
<dbReference type="Gene3D" id="3.30.300.20">
    <property type="match status" value="1"/>
</dbReference>
<dbReference type="HAMAP" id="MF_00003">
    <property type="entry name" value="RbfA"/>
    <property type="match status" value="1"/>
</dbReference>
<dbReference type="InterPro" id="IPR015946">
    <property type="entry name" value="KH_dom-like_a/b"/>
</dbReference>
<dbReference type="InterPro" id="IPR000238">
    <property type="entry name" value="RbfA"/>
</dbReference>
<dbReference type="InterPro" id="IPR023799">
    <property type="entry name" value="RbfA_dom_sf"/>
</dbReference>
<dbReference type="InterPro" id="IPR020053">
    <property type="entry name" value="Ribosome-bd_factorA_CS"/>
</dbReference>
<dbReference type="NCBIfam" id="NF001799">
    <property type="entry name" value="PRK00521.2-2"/>
    <property type="match status" value="1"/>
</dbReference>
<dbReference type="NCBIfam" id="TIGR00082">
    <property type="entry name" value="rbfA"/>
    <property type="match status" value="1"/>
</dbReference>
<dbReference type="PANTHER" id="PTHR33515">
    <property type="entry name" value="RIBOSOME-BINDING FACTOR A, CHLOROPLASTIC-RELATED"/>
    <property type="match status" value="1"/>
</dbReference>
<dbReference type="PANTHER" id="PTHR33515:SF1">
    <property type="entry name" value="RIBOSOME-BINDING FACTOR A, CHLOROPLASTIC-RELATED"/>
    <property type="match status" value="1"/>
</dbReference>
<dbReference type="Pfam" id="PF02033">
    <property type="entry name" value="RBFA"/>
    <property type="match status" value="1"/>
</dbReference>
<dbReference type="SUPFAM" id="SSF89919">
    <property type="entry name" value="Ribosome-binding factor A, RbfA"/>
    <property type="match status" value="1"/>
</dbReference>
<dbReference type="PROSITE" id="PS01319">
    <property type="entry name" value="RBFA"/>
    <property type="match status" value="1"/>
</dbReference>
<comment type="function">
    <text evidence="1">One of several proteins that assist in the late maturation steps of the functional core of the 30S ribosomal subunit. Associates with free 30S ribosomal subunits (but not with 30S subunits that are part of 70S ribosomes or polysomes). Required for efficient processing of 16S rRNA. May interact with the 5'-terminal helix region of 16S rRNA.</text>
</comment>
<comment type="subunit">
    <text evidence="1">Monomer. Binds 30S ribosomal subunits, but not 50S ribosomal subunits or 70S ribosomes.</text>
</comment>
<comment type="subcellular location">
    <subcellularLocation>
        <location evidence="1">Cytoplasm</location>
    </subcellularLocation>
</comment>
<comment type="similarity">
    <text evidence="1">Belongs to the RbfA family.</text>
</comment>
<keyword id="KW-0963">Cytoplasm</keyword>
<keyword id="KW-0690">Ribosome biogenesis</keyword>
<reference key="1">
    <citation type="journal article" date="2009" name="PLoS ONE">
        <title>Genome sequence of the endosymbiont Rickettsia peacockii and comparison with virulent Rickettsia rickettsii: identification of virulence factors.</title>
        <authorList>
            <person name="Felsheim R.F."/>
            <person name="Kurtti T.J."/>
            <person name="Munderloh U.G."/>
        </authorList>
    </citation>
    <scope>NUCLEOTIDE SEQUENCE [LARGE SCALE GENOMIC DNA]</scope>
    <source>
        <strain>Rustic</strain>
    </source>
</reference>
<accession>C4K0J6</accession>
<organism>
    <name type="scientific">Rickettsia peacockii (strain Rustic)</name>
    <dbReference type="NCBI Taxonomy" id="562019"/>
    <lineage>
        <taxon>Bacteria</taxon>
        <taxon>Pseudomonadati</taxon>
        <taxon>Pseudomonadota</taxon>
        <taxon>Alphaproteobacteria</taxon>
        <taxon>Rickettsiales</taxon>
        <taxon>Rickettsiaceae</taxon>
        <taxon>Rickettsieae</taxon>
        <taxon>Rickettsia</taxon>
        <taxon>spotted fever group</taxon>
    </lineage>
</organism>